<sequence length="132" mass="14731">MIVDTSVWIAYLSTSESLASRWLADRIAADSTVIVPEVVMMELLIGKTDEDTAALRRRLLQRFAIEPLAPVRDAEDAAAIHRRCRRGGDTVRSLIDCQVAAMALRIGVAVAHRDRDYEAIRTHCGLRTEPLF</sequence>
<keyword id="KW-0002">3D-structure</keyword>
<keyword id="KW-0378">Hydrolase</keyword>
<keyword id="KW-0460">Magnesium</keyword>
<keyword id="KW-0464">Manganese</keyword>
<keyword id="KW-0479">Metal-binding</keyword>
<keyword id="KW-0540">Nuclease</keyword>
<keyword id="KW-1185">Reference proteome</keyword>
<keyword id="KW-1277">Toxin-antitoxin system</keyword>
<protein>
    <recommendedName>
        <fullName evidence="1 4">Ribonuclease VapC15</fullName>
        <shortName evidence="1">RNase VapC15</shortName>
        <ecNumber evidence="1">3.1.-.-</ecNumber>
    </recommendedName>
    <alternativeName>
        <fullName evidence="1">Toxin VapC15</fullName>
    </alternativeName>
</protein>
<dbReference type="EC" id="3.1.-.-" evidence="1"/>
<dbReference type="EMBL" id="AL123456">
    <property type="protein sequence ID" value="CCP44782.1"/>
    <property type="molecule type" value="Genomic_DNA"/>
</dbReference>
<dbReference type="PIR" id="H70759">
    <property type="entry name" value="H70759"/>
</dbReference>
<dbReference type="RefSeq" id="NP_216526.1">
    <property type="nucleotide sequence ID" value="NC_000962.3"/>
</dbReference>
<dbReference type="RefSeq" id="WP_003410075.1">
    <property type="nucleotide sequence ID" value="NZ_NVQJ01000043.1"/>
</dbReference>
<dbReference type="PDB" id="4CHG">
    <property type="method" value="X-ray"/>
    <property type="resolution" value="2.10 A"/>
    <property type="chains" value="A/B/C/D/E/F=1-132"/>
</dbReference>
<dbReference type="PDBsum" id="4CHG"/>
<dbReference type="SMR" id="P9WF97"/>
<dbReference type="STRING" id="83332.Rv2010"/>
<dbReference type="PaxDb" id="83332-Rv2010"/>
<dbReference type="DNASU" id="888933"/>
<dbReference type="GeneID" id="888933"/>
<dbReference type="KEGG" id="mtu:Rv2010"/>
<dbReference type="KEGG" id="mtv:RVBD_2010"/>
<dbReference type="TubercuList" id="Rv2010"/>
<dbReference type="eggNOG" id="COG1487">
    <property type="taxonomic scope" value="Bacteria"/>
</dbReference>
<dbReference type="InParanoid" id="P9WF97"/>
<dbReference type="OrthoDB" id="9811788at2"/>
<dbReference type="PhylomeDB" id="P9WF97"/>
<dbReference type="EvolutionaryTrace" id="P9WF97"/>
<dbReference type="Proteomes" id="UP000001584">
    <property type="component" value="Chromosome"/>
</dbReference>
<dbReference type="GO" id="GO:0000287">
    <property type="term" value="F:magnesium ion binding"/>
    <property type="evidence" value="ECO:0007669"/>
    <property type="project" value="UniProtKB-UniRule"/>
</dbReference>
<dbReference type="GO" id="GO:0004540">
    <property type="term" value="F:RNA nuclease activity"/>
    <property type="evidence" value="ECO:0000318"/>
    <property type="project" value="GO_Central"/>
</dbReference>
<dbReference type="GO" id="GO:0045926">
    <property type="term" value="P:negative regulation of growth"/>
    <property type="evidence" value="ECO:0000315"/>
    <property type="project" value="MTBBASE"/>
</dbReference>
<dbReference type="GO" id="GO:0001666">
    <property type="term" value="P:response to hypoxia"/>
    <property type="evidence" value="ECO:0000270"/>
    <property type="project" value="MTBBASE"/>
</dbReference>
<dbReference type="CDD" id="cd18756">
    <property type="entry name" value="PIN_MtVapC15-VapC11-like"/>
    <property type="match status" value="1"/>
</dbReference>
<dbReference type="FunFam" id="3.40.50.1010:FF:000073">
    <property type="entry name" value="Ribonuclease VapC"/>
    <property type="match status" value="1"/>
</dbReference>
<dbReference type="Gene3D" id="3.40.50.1010">
    <property type="entry name" value="5'-nuclease"/>
    <property type="match status" value="1"/>
</dbReference>
<dbReference type="HAMAP" id="MF_00265">
    <property type="entry name" value="VapC_Nob1"/>
    <property type="match status" value="1"/>
</dbReference>
<dbReference type="InterPro" id="IPR029060">
    <property type="entry name" value="PIN-like_dom_sf"/>
</dbReference>
<dbReference type="InterPro" id="IPR002716">
    <property type="entry name" value="PIN_dom"/>
</dbReference>
<dbReference type="InterPro" id="IPR051749">
    <property type="entry name" value="PINc/VapC_TA_RNase"/>
</dbReference>
<dbReference type="InterPro" id="IPR022907">
    <property type="entry name" value="VapC_family"/>
</dbReference>
<dbReference type="PANTHER" id="PTHR42740">
    <property type="entry name" value="RIBONUCLEASE VAPC3"/>
    <property type="match status" value="1"/>
</dbReference>
<dbReference type="PANTHER" id="PTHR42740:SF1">
    <property type="entry name" value="RIBONUCLEASE VAPC3"/>
    <property type="match status" value="1"/>
</dbReference>
<dbReference type="Pfam" id="PF01850">
    <property type="entry name" value="PIN"/>
    <property type="match status" value="1"/>
</dbReference>
<dbReference type="SUPFAM" id="SSF88723">
    <property type="entry name" value="PIN domain-like"/>
    <property type="match status" value="1"/>
</dbReference>
<feature type="chain" id="PRO_0000103939" description="Ribonuclease VapC15">
    <location>
        <begin position="1"/>
        <end position="132"/>
    </location>
</feature>
<feature type="domain" description="PINc" evidence="1">
    <location>
        <begin position="1"/>
        <end position="121"/>
    </location>
</feature>
<feature type="binding site" evidence="1 3">
    <location>
        <position position="96"/>
    </location>
    <ligand>
        <name>Mg(2+)</name>
        <dbReference type="ChEBI" id="CHEBI:18420"/>
        <note>ligand shared with antitoxin</note>
    </ligand>
</feature>
<feature type="binding site" evidence="3">
    <location>
        <position position="96"/>
    </location>
    <ligand>
        <name>Mn(2+)</name>
        <dbReference type="ChEBI" id="CHEBI:29035"/>
        <note>ligand shared with antitoxin</note>
    </ligand>
</feature>
<feature type="binding site" evidence="3">
    <location>
        <position position="114"/>
    </location>
    <ligand>
        <name>Mn(2+)</name>
        <dbReference type="ChEBI" id="CHEBI:29035"/>
        <note>ligand shared with antitoxin</note>
    </ligand>
</feature>
<feature type="binding site" evidence="3">
    <location>
        <position position="116"/>
    </location>
    <ligand>
        <name>Mn(2+)</name>
        <dbReference type="ChEBI" id="CHEBI:29035"/>
        <note>ligand shared with antitoxin</note>
    </ligand>
</feature>
<feature type="strand" evidence="5">
    <location>
        <begin position="1"/>
        <end position="3"/>
    </location>
</feature>
<feature type="helix" evidence="5">
    <location>
        <begin position="5"/>
        <end position="13"/>
    </location>
</feature>
<feature type="strand" evidence="5">
    <location>
        <begin position="15"/>
        <end position="17"/>
    </location>
</feature>
<feature type="helix" evidence="5">
    <location>
        <begin position="18"/>
        <end position="28"/>
    </location>
</feature>
<feature type="strand" evidence="5">
    <location>
        <begin position="33"/>
        <end position="36"/>
    </location>
</feature>
<feature type="helix" evidence="5">
    <location>
        <begin position="37"/>
        <end position="44"/>
    </location>
</feature>
<feature type="helix" evidence="5">
    <location>
        <begin position="50"/>
        <end position="61"/>
    </location>
</feature>
<feature type="strand" evidence="5">
    <location>
        <begin position="63"/>
        <end position="66"/>
    </location>
</feature>
<feature type="helix" evidence="5">
    <location>
        <begin position="72"/>
        <end position="86"/>
    </location>
</feature>
<feature type="helix" evidence="5">
    <location>
        <begin position="94"/>
        <end position="106"/>
    </location>
</feature>
<feature type="strand" evidence="5">
    <location>
        <begin position="110"/>
        <end position="113"/>
    </location>
</feature>
<feature type="helix" evidence="5">
    <location>
        <begin position="116"/>
        <end position="124"/>
    </location>
</feature>
<feature type="strand" evidence="5">
    <location>
        <begin position="128"/>
        <end position="130"/>
    </location>
</feature>
<organism>
    <name type="scientific">Mycobacterium tuberculosis (strain ATCC 25618 / H37Rv)</name>
    <dbReference type="NCBI Taxonomy" id="83332"/>
    <lineage>
        <taxon>Bacteria</taxon>
        <taxon>Bacillati</taxon>
        <taxon>Actinomycetota</taxon>
        <taxon>Actinomycetes</taxon>
        <taxon>Mycobacteriales</taxon>
        <taxon>Mycobacteriaceae</taxon>
        <taxon>Mycobacterium</taxon>
        <taxon>Mycobacterium tuberculosis complex</taxon>
    </lineage>
</organism>
<evidence type="ECO:0000255" key="1">
    <source>
        <dbReference type="HAMAP-Rule" id="MF_00265"/>
    </source>
</evidence>
<evidence type="ECO:0000269" key="2">
    <source>
    </source>
</evidence>
<evidence type="ECO:0000269" key="3">
    <source>
    </source>
</evidence>
<evidence type="ECO:0000303" key="4">
    <source>
    </source>
</evidence>
<evidence type="ECO:0007829" key="5">
    <source>
        <dbReference type="PDB" id="4CHG"/>
    </source>
</evidence>
<reference key="1">
    <citation type="journal article" date="1998" name="Nature">
        <title>Deciphering the biology of Mycobacterium tuberculosis from the complete genome sequence.</title>
        <authorList>
            <person name="Cole S.T."/>
            <person name="Brosch R."/>
            <person name="Parkhill J."/>
            <person name="Garnier T."/>
            <person name="Churcher C.M."/>
            <person name="Harris D.E."/>
            <person name="Gordon S.V."/>
            <person name="Eiglmeier K."/>
            <person name="Gas S."/>
            <person name="Barry C.E. III"/>
            <person name="Tekaia F."/>
            <person name="Badcock K."/>
            <person name="Basham D."/>
            <person name="Brown D."/>
            <person name="Chillingworth T."/>
            <person name="Connor R."/>
            <person name="Davies R.M."/>
            <person name="Devlin K."/>
            <person name="Feltwell T."/>
            <person name="Gentles S."/>
            <person name="Hamlin N."/>
            <person name="Holroyd S."/>
            <person name="Hornsby T."/>
            <person name="Jagels K."/>
            <person name="Krogh A."/>
            <person name="McLean J."/>
            <person name="Moule S."/>
            <person name="Murphy L.D."/>
            <person name="Oliver S."/>
            <person name="Osborne J."/>
            <person name="Quail M.A."/>
            <person name="Rajandream M.A."/>
            <person name="Rogers J."/>
            <person name="Rutter S."/>
            <person name="Seeger K."/>
            <person name="Skelton S."/>
            <person name="Squares S."/>
            <person name="Squares R."/>
            <person name="Sulston J.E."/>
            <person name="Taylor K."/>
            <person name="Whitehead S."/>
            <person name="Barrell B.G."/>
        </authorList>
    </citation>
    <scope>NUCLEOTIDE SEQUENCE [LARGE SCALE GENOMIC DNA]</scope>
    <source>
        <strain>ATCC 25618 / H37Rv</strain>
    </source>
</reference>
<reference key="2">
    <citation type="journal article" date="2005" name="Nucleic Acids Res.">
        <title>Toxin-antitoxin loci are highly abundant in free-living but lost from host-associated prokaryotes.</title>
        <authorList>
            <person name="Pandey D.P."/>
            <person name="Gerdes K."/>
        </authorList>
    </citation>
    <scope>POSSIBLE FUNCTION</scope>
    <source>
        <strain>ATCC 25618 / H37Rv</strain>
    </source>
</reference>
<reference key="3">
    <citation type="journal article" date="2009" name="PLoS Genet.">
        <title>Comprehensive functional analysis of Mycobacterium tuberculosis toxin-antitoxin systems: implications for pathogenesis, stress responses, and evolution.</title>
        <authorList>
            <person name="Ramage H.R."/>
            <person name="Connolly L.E."/>
            <person name="Cox J.S."/>
        </authorList>
    </citation>
    <scope>EXPRESSION IN M.SMEGMATIS</scope>
    <scope>FUNCTION AS A TOXIN</scope>
    <scope>INDUCTION BY HYPOXIA</scope>
    <source>
        <strain>ATCC 35801 / TMC 107 / Erdman</strain>
    </source>
</reference>
<reference key="4">
    <citation type="journal article" date="2011" name="Mol. Cell. Proteomics">
        <title>Proteogenomic analysis of Mycobacterium tuberculosis by high resolution mass spectrometry.</title>
        <authorList>
            <person name="Kelkar D.S."/>
            <person name="Kumar D."/>
            <person name="Kumar P."/>
            <person name="Balakrishnan L."/>
            <person name="Muthusamy B."/>
            <person name="Yadav A.K."/>
            <person name="Shrivastava P."/>
            <person name="Marimuthu A."/>
            <person name="Anand S."/>
            <person name="Sundaram H."/>
            <person name="Kingsbury R."/>
            <person name="Harsha H.C."/>
            <person name="Nair B."/>
            <person name="Prasad T.S."/>
            <person name="Chauhan D.S."/>
            <person name="Katoch K."/>
            <person name="Katoch V.M."/>
            <person name="Kumar P."/>
            <person name="Chaerkady R."/>
            <person name="Ramachandran S."/>
            <person name="Dash D."/>
            <person name="Pandey A."/>
        </authorList>
    </citation>
    <scope>IDENTIFICATION BY MASS SPECTROMETRY [LARGE SCALE ANALYSIS]</scope>
    <source>
        <strain>ATCC 25618 / H37Rv</strain>
    </source>
</reference>
<reference key="5">
    <citation type="journal article" date="2014" name="J. Struct. Biol.">
        <title>Crystal structure of the VapBC-15 complex from Mycobacterium tuberculosis reveals a two-metal ion dependent PIN-domain ribonuclease and a variable mode of toxin-antitoxin assembly.</title>
        <authorList>
            <person name="Das U."/>
            <person name="Pogenberg V."/>
            <person name="Subhramanyam U.K."/>
            <person name="Wilmanns M."/>
            <person name="Gourinath S."/>
            <person name="Srinivasan A."/>
        </authorList>
    </citation>
    <scope>X-RAY CRYSTALLOGRAPHY (2.1 ANGSTROMS) IN COMPLEX WITH VAPB15; MAGNESIUM AND MANGANESE</scope>
    <scope>FUNCTION</scope>
    <scope>COFACTOR</scope>
    <scope>ACTIVITY REGULATION</scope>
    <scope>SUBUNIT</scope>
    <source>
        <strain>H37Rv</strain>
    </source>
</reference>
<name>VPC15_MYCTU</name>
<comment type="function">
    <text evidence="1 2 3">Toxic component of a type II toxin-antitoxin (TA) system. Degrades total E.coli RNA, which is partially inhibited by cognate antitoxin VapB15 (PubMed:25450593). Upon expression in M.smegmatis inhibits colony formation, which is neutralized by coexpression with VapB15 (PubMed:20011113).</text>
</comment>
<comment type="cofactor">
    <cofactor evidence="1 3">
        <name>Mg(2+)</name>
        <dbReference type="ChEBI" id="CHEBI:18420"/>
    </cofactor>
    <text evidence="3">The heterotrimer binds 1 Mg(2+)-Mn(2+) pair while the heterotetramer binds 2 pairs. Both metals are shared by the toxin-antitoxin pair.</text>
</comment>
<comment type="cofactor">
    <cofactor evidence="3">
        <name>Mn(2+)</name>
        <dbReference type="ChEBI" id="CHEBI:29035"/>
    </cofactor>
    <text evidence="3">The heterotrimer binds 1 Mg(2+)-Mn(2+) pair while the heterotetramer binds 2 pairs. Both metals are shared by the toxin-antitoxin pair.</text>
</comment>
<comment type="activity regulation">
    <text evidence="3">RNase activity inhibited by EDTA.</text>
</comment>
<comment type="subunit">
    <text evidence="3">Crystallizes as a VapB15-VapC15(2) heterotrimer and as a VapB15(2)-VapC15(2) heterotetramer; each toxin pair forms a homodimer which creates a channel in which the antitoxin binds.</text>
</comment>
<comment type="induction">
    <text evidence="2">Induced by hypoxia.</text>
</comment>
<comment type="miscellaneous">
    <text evidence="3">In this enzyme the conserved residue Asp-4 binds Mg(2+) via H(2)O.</text>
</comment>
<comment type="similarity">
    <text evidence="1">Belongs to the PINc/VapC protein family.</text>
</comment>
<gene>
    <name evidence="1" type="primary">vapC15</name>
    <name type="ordered locus">Rv2010</name>
    <name type="ORF">MTCY39.07c</name>
</gene>
<proteinExistence type="evidence at protein level"/>
<accession>P9WF97</accession>
<accession>L0T8D0</accession>
<accession>P64925</accession>
<accession>Q10847</accession>